<keyword id="KW-0456">Lyase</keyword>
<keyword id="KW-0479">Metal-binding</keyword>
<keyword id="KW-0862">Zinc</keyword>
<name>GFAL_HALED</name>
<sequence length="157" mass="17542">MLLEGSCHCGAVRFRVVSPHPYPFNRCYCSICRKTAGGGGYAINLSGDADTLVVHGAEHTSIYQAEIDGLTSPGERHFCSRCASALWVFDPRWPELVHPFASAIDSDLPRPPERVHLMLENKPDWVEIESREQDRCFAGYPDESIAEWHARLGLEEG</sequence>
<proteinExistence type="inferred from homology"/>
<accession>E1VBT6</accession>
<accession>Q2WBH8</accession>
<gene>
    <name type="ordered locus">HELO_2322</name>
</gene>
<organism>
    <name type="scientific">Halomonas elongata (strain ATCC 33173 / DSM 2581 / NBRC 15536 / NCIMB 2198 / 1H9)</name>
    <dbReference type="NCBI Taxonomy" id="768066"/>
    <lineage>
        <taxon>Bacteria</taxon>
        <taxon>Pseudomonadati</taxon>
        <taxon>Pseudomonadota</taxon>
        <taxon>Gammaproteobacteria</taxon>
        <taxon>Oceanospirillales</taxon>
        <taxon>Halomonadaceae</taxon>
        <taxon>Halomonas</taxon>
    </lineage>
</organism>
<evidence type="ECO:0000250" key="1"/>
<evidence type="ECO:0000255" key="2">
    <source>
        <dbReference type="PROSITE-ProRule" id="PRU01239"/>
    </source>
</evidence>
<evidence type="ECO:0000305" key="3"/>
<protein>
    <recommendedName>
        <fullName>Putative glutathione-dependent formaldehyde-activating enzyme</fullName>
        <ecNumber>4.4.1.22</ecNumber>
    </recommendedName>
</protein>
<comment type="function">
    <text evidence="1">Catalyzes the condensation of formaldehyde and glutathione to S-hydroxymethylglutathione.</text>
</comment>
<comment type="catalytic activity">
    <reaction>
        <text>S-(hydroxymethyl)glutathione = glutathione + formaldehyde</text>
        <dbReference type="Rhea" id="RHEA:22488"/>
        <dbReference type="ChEBI" id="CHEBI:16842"/>
        <dbReference type="ChEBI" id="CHEBI:57925"/>
        <dbReference type="ChEBI" id="CHEBI:58758"/>
        <dbReference type="EC" id="4.4.1.22"/>
    </reaction>
</comment>
<comment type="cofactor">
    <cofactor evidence="2">
        <name>Zn(2+)</name>
        <dbReference type="ChEBI" id="CHEBI:29105"/>
    </cofactor>
    <text evidence="2">Binds 2 Zn(2+) ions per subunit.</text>
</comment>
<comment type="pathway">
    <text>One-carbon metabolism; formaldehyde degradation; formate from formaldehyde (glutathione route): step 1/3.</text>
</comment>
<comment type="similarity">
    <text evidence="3">Belongs to the Gfa family.</text>
</comment>
<feature type="chain" id="PRO_0000423825" description="Putative glutathione-dependent formaldehyde-activating enzyme">
    <location>
        <begin position="1"/>
        <end position="157"/>
    </location>
</feature>
<feature type="domain" description="CENP-V/GFA" evidence="2">
    <location>
        <begin position="3"/>
        <end position="134"/>
    </location>
</feature>
<feature type="binding site" evidence="2">
    <location>
        <position position="7"/>
    </location>
    <ligand>
        <name>Zn(2+)</name>
        <dbReference type="ChEBI" id="CHEBI:29105"/>
        <label>1</label>
        <note>structural</note>
    </ligand>
</feature>
<feature type="binding site" evidence="2">
    <location>
        <position position="9"/>
    </location>
    <ligand>
        <name>Zn(2+)</name>
        <dbReference type="ChEBI" id="CHEBI:29105"/>
        <label>1</label>
        <note>structural</note>
    </ligand>
</feature>
<feature type="binding site" evidence="2">
    <location>
        <position position="27"/>
    </location>
    <ligand>
        <name>Zn(2+)</name>
        <dbReference type="ChEBI" id="CHEBI:29105"/>
        <label>2</label>
        <note>catalytic</note>
    </ligand>
</feature>
<feature type="binding site" evidence="2">
    <location>
        <position position="29"/>
    </location>
    <ligand>
        <name>Zn(2+)</name>
        <dbReference type="ChEBI" id="CHEBI:29105"/>
        <label>2</label>
        <note>catalytic</note>
    </ligand>
</feature>
<feature type="binding site" evidence="2">
    <location>
        <position position="32"/>
    </location>
    <ligand>
        <name>Zn(2+)</name>
        <dbReference type="ChEBI" id="CHEBI:29105"/>
        <label>2</label>
        <note>catalytic</note>
    </ligand>
</feature>
<feature type="binding site" evidence="2">
    <location>
        <position position="79"/>
    </location>
    <ligand>
        <name>Zn(2+)</name>
        <dbReference type="ChEBI" id="CHEBI:29105"/>
        <label>1</label>
        <note>structural</note>
    </ligand>
</feature>
<feature type="binding site" evidence="2">
    <location>
        <position position="82"/>
    </location>
    <ligand>
        <name>Zn(2+)</name>
        <dbReference type="ChEBI" id="CHEBI:29105"/>
        <label>1</label>
        <note>structural</note>
    </ligand>
</feature>
<dbReference type="EC" id="4.4.1.22"/>
<dbReference type="EMBL" id="AM167899">
    <property type="protein sequence ID" value="CAJ44470.1"/>
    <property type="molecule type" value="Genomic_DNA"/>
</dbReference>
<dbReference type="EMBL" id="FN869568">
    <property type="protein sequence ID" value="CBV42206.1"/>
    <property type="molecule type" value="Genomic_DNA"/>
</dbReference>
<dbReference type="RefSeq" id="WP_013332078.1">
    <property type="nucleotide sequence ID" value="NC_014532.2"/>
</dbReference>
<dbReference type="SMR" id="E1VBT6"/>
<dbReference type="STRING" id="768066.HELO_2322"/>
<dbReference type="GeneID" id="91009625"/>
<dbReference type="KEGG" id="hel:HELO_2322"/>
<dbReference type="eggNOG" id="COG3791">
    <property type="taxonomic scope" value="Bacteria"/>
</dbReference>
<dbReference type="HOGENOM" id="CLU_116419_0_0_6"/>
<dbReference type="OrthoDB" id="9786619at2"/>
<dbReference type="UniPathway" id="UPA00562">
    <property type="reaction ID" value="UER00621"/>
</dbReference>
<dbReference type="Proteomes" id="UP000008707">
    <property type="component" value="Chromosome"/>
</dbReference>
<dbReference type="GO" id="GO:0046872">
    <property type="term" value="F:metal ion binding"/>
    <property type="evidence" value="ECO:0007669"/>
    <property type="project" value="UniProtKB-KW"/>
</dbReference>
<dbReference type="GO" id="GO:0051907">
    <property type="term" value="F:S-(hydroxymethyl)glutathione synthase activity"/>
    <property type="evidence" value="ECO:0007669"/>
    <property type="project" value="UniProtKB-EC"/>
</dbReference>
<dbReference type="GO" id="GO:0046294">
    <property type="term" value="P:formaldehyde catabolic process"/>
    <property type="evidence" value="ECO:0007669"/>
    <property type="project" value="UniProtKB-UniPathway"/>
</dbReference>
<dbReference type="Gene3D" id="2.170.150.70">
    <property type="match status" value="1"/>
</dbReference>
<dbReference type="InterPro" id="IPR006913">
    <property type="entry name" value="CENP-V/GFA"/>
</dbReference>
<dbReference type="InterPro" id="IPR011057">
    <property type="entry name" value="Mss4-like_sf"/>
</dbReference>
<dbReference type="PANTHER" id="PTHR33337:SF44">
    <property type="entry name" value="DUF636 DOMAIN PROTEIN (AFU_ORTHOLOGUE AFUA_1G09754)"/>
    <property type="match status" value="1"/>
</dbReference>
<dbReference type="PANTHER" id="PTHR33337">
    <property type="entry name" value="GFA DOMAIN-CONTAINING PROTEIN"/>
    <property type="match status" value="1"/>
</dbReference>
<dbReference type="Pfam" id="PF04828">
    <property type="entry name" value="GFA"/>
    <property type="match status" value="1"/>
</dbReference>
<dbReference type="SUPFAM" id="SSF51316">
    <property type="entry name" value="Mss4-like"/>
    <property type="match status" value="1"/>
</dbReference>
<dbReference type="PROSITE" id="PS51891">
    <property type="entry name" value="CENP_V_GFA"/>
    <property type="match status" value="1"/>
</dbReference>
<reference key="1">
    <citation type="journal article" date="2006" name="Saline Syst.">
        <title>NhaD type sodium/proton-antiporter of Halomonas elongata: a salt stress response mechanism in marine habitats?</title>
        <authorList>
            <person name="Kurz M."/>
            <person name="Brunig A.N."/>
            <person name="Galinski E.A."/>
        </authorList>
    </citation>
    <scope>NUCLEOTIDE SEQUENCE [GENOMIC DNA]</scope>
    <source>
        <strain>ATCC 33173 / DSM 2581 / NBRC 15536 / NCIMB 2198 / 1H9</strain>
    </source>
</reference>
<reference key="2">
    <citation type="journal article" date="2011" name="Environ. Microbiol.">
        <title>A blueprint of ectoine metabolism from the genome of the industrial producer Halomonas elongata DSM 2581(T).</title>
        <authorList>
            <person name="Schwibbert K."/>
            <person name="Marin-Sanguino A."/>
            <person name="Bagyan I."/>
            <person name="Heidrich G."/>
            <person name="Lentzen G."/>
            <person name="Seitz H."/>
            <person name="Rampp M."/>
            <person name="Schuster S.C."/>
            <person name="Klenk H.P."/>
            <person name="Pfeiffer F."/>
            <person name="Oesterhelt D."/>
            <person name="Kunte H.J."/>
        </authorList>
    </citation>
    <scope>NUCLEOTIDE SEQUENCE [LARGE SCALE GENOMIC DNA]</scope>
    <source>
        <strain>ATCC 33173 / DSM 2581 / NBRC 15536 / NCIMB 2198 / 1H9</strain>
    </source>
</reference>